<accession>Q9AR86</accession>
<feature type="transit peptide" description="Chloroplast" evidence="3">
    <location>
        <begin position="1"/>
        <end position="37"/>
    </location>
</feature>
<feature type="chain" id="PRO_0000398180" description="Isoprene synthase, chloroplastic">
    <location>
        <begin position="38"/>
        <end position="595"/>
    </location>
</feature>
<feature type="short sequence motif" description="DDXXD motif" evidence="2">
    <location>
        <begin position="345"/>
        <end position="349"/>
    </location>
</feature>
<feature type="binding site" evidence="9 10">
    <location>
        <position position="345"/>
    </location>
    <ligand>
        <name>dimethylallyl diphosphate</name>
        <dbReference type="ChEBI" id="CHEBI:57623"/>
    </ligand>
</feature>
<feature type="binding site" evidence="5 10">
    <location>
        <position position="345"/>
    </location>
    <ligand>
        <name>Mg(2+)</name>
        <dbReference type="ChEBI" id="CHEBI:18420"/>
        <label>1</label>
    </ligand>
</feature>
<feature type="binding site" evidence="5 10">
    <location>
        <position position="345"/>
    </location>
    <ligand>
        <name>Mg(2+)</name>
        <dbReference type="ChEBI" id="CHEBI:18420"/>
        <label>2</label>
    </ligand>
</feature>
<feature type="binding site" evidence="5 10">
    <location>
        <position position="349"/>
    </location>
    <ligand>
        <name>Mg(2+)</name>
        <dbReference type="ChEBI" id="CHEBI:18420"/>
        <label>1</label>
    </ligand>
</feature>
<feature type="binding site" evidence="2">
    <location>
        <position position="349"/>
    </location>
    <ligand>
        <name>Mg(2+)</name>
        <dbReference type="ChEBI" id="CHEBI:18420"/>
        <label>2</label>
    </ligand>
</feature>
<feature type="binding site" evidence="9 10">
    <location>
        <position position="423"/>
    </location>
    <ligand>
        <name>dimethylallyl diphosphate</name>
        <dbReference type="ChEBI" id="CHEBI:57623"/>
    </ligand>
</feature>
<feature type="binding site" evidence="9 10">
    <location>
        <position position="486"/>
    </location>
    <ligand>
        <name>dimethylallyl diphosphate</name>
        <dbReference type="ChEBI" id="CHEBI:57623"/>
    </ligand>
</feature>
<feature type="binding site" evidence="9 10">
    <location>
        <position position="489"/>
    </location>
    <ligand>
        <name>dimethylallyl diphosphate</name>
        <dbReference type="ChEBI" id="CHEBI:57623"/>
    </ligand>
</feature>
<feature type="binding site" evidence="2">
    <location>
        <position position="489"/>
    </location>
    <ligand>
        <name>Mg(2+)</name>
        <dbReference type="ChEBI" id="CHEBI:18420"/>
        <label>3</label>
    </ligand>
</feature>
<feature type="binding site" evidence="2">
    <location>
        <position position="493"/>
    </location>
    <ligand>
        <name>Mg(2+)</name>
        <dbReference type="ChEBI" id="CHEBI:18420"/>
        <label>3</label>
    </ligand>
</feature>
<feature type="binding site" evidence="5 10">
    <location>
        <position position="497"/>
    </location>
    <ligand>
        <name>Mg(2+)</name>
        <dbReference type="ChEBI" id="CHEBI:18420"/>
        <label>3</label>
    </ligand>
</feature>
<feature type="helix" evidence="11">
    <location>
        <begin position="67"/>
        <end position="70"/>
    </location>
</feature>
<feature type="helix" evidence="11">
    <location>
        <begin position="80"/>
        <end position="98"/>
    </location>
</feature>
<feature type="helix" evidence="11">
    <location>
        <begin position="104"/>
        <end position="116"/>
    </location>
</feature>
<feature type="helix" evidence="11">
    <location>
        <begin position="120"/>
        <end position="122"/>
    </location>
</feature>
<feature type="helix" evidence="11">
    <location>
        <begin position="124"/>
        <end position="136"/>
    </location>
</feature>
<feature type="helix" evidence="11">
    <location>
        <begin position="139"/>
        <end position="143"/>
    </location>
</feature>
<feature type="turn" evidence="11">
    <location>
        <begin position="144"/>
        <end position="146"/>
    </location>
</feature>
<feature type="helix" evidence="11">
    <location>
        <begin position="148"/>
        <end position="160"/>
    </location>
</feature>
<feature type="helix" evidence="11">
    <location>
        <begin position="167"/>
        <end position="173"/>
    </location>
</feature>
<feature type="strand" evidence="12">
    <location>
        <begin position="176"/>
        <end position="178"/>
    </location>
</feature>
<feature type="helix" evidence="11">
    <location>
        <begin position="182"/>
        <end position="186"/>
    </location>
</feature>
<feature type="helix" evidence="11">
    <location>
        <begin position="188"/>
        <end position="198"/>
    </location>
</feature>
<feature type="helix" evidence="11">
    <location>
        <begin position="206"/>
        <end position="220"/>
    </location>
</feature>
<feature type="helix" evidence="11">
    <location>
        <begin position="224"/>
        <end position="227"/>
    </location>
</feature>
<feature type="helix" evidence="11">
    <location>
        <begin position="229"/>
        <end position="240"/>
    </location>
</feature>
<feature type="turn" evidence="11">
    <location>
        <begin position="243"/>
        <end position="245"/>
    </location>
</feature>
<feature type="helix" evidence="11">
    <location>
        <begin position="248"/>
        <end position="259"/>
    </location>
</feature>
<feature type="helix" evidence="11">
    <location>
        <begin position="267"/>
        <end position="298"/>
    </location>
</feature>
<feature type="helix" evidence="11">
    <location>
        <begin position="300"/>
        <end position="303"/>
    </location>
</feature>
<feature type="helix" evidence="11">
    <location>
        <begin position="311"/>
        <end position="321"/>
    </location>
</feature>
<feature type="helix" evidence="11">
    <location>
        <begin position="325"/>
        <end position="327"/>
    </location>
</feature>
<feature type="helix" evidence="11">
    <location>
        <begin position="328"/>
        <end position="349"/>
    </location>
</feature>
<feature type="helix" evidence="11">
    <location>
        <begin position="354"/>
        <end position="366"/>
    </location>
</feature>
<feature type="helix" evidence="11">
    <location>
        <begin position="369"/>
        <end position="374"/>
    </location>
</feature>
<feature type="helix" evidence="11">
    <location>
        <begin position="377"/>
        <end position="401"/>
    </location>
</feature>
<feature type="helix" evidence="11">
    <location>
        <begin position="406"/>
        <end position="428"/>
    </location>
</feature>
<feature type="helix" evidence="11">
    <location>
        <begin position="435"/>
        <end position="445"/>
    </location>
</feature>
<feature type="helix" evidence="11">
    <location>
        <begin position="448"/>
        <end position="459"/>
    </location>
</feature>
<feature type="helix" evidence="11">
    <location>
        <begin position="465"/>
        <end position="472"/>
    </location>
</feature>
<feature type="helix" evidence="11">
    <location>
        <begin position="476"/>
        <end position="498"/>
    </location>
</feature>
<feature type="turn" evidence="11">
    <location>
        <begin position="499"/>
        <end position="501"/>
    </location>
</feature>
<feature type="helix" evidence="11">
    <location>
        <begin position="506"/>
        <end position="514"/>
    </location>
</feature>
<feature type="helix" evidence="11">
    <location>
        <begin position="518"/>
        <end position="541"/>
    </location>
</feature>
<feature type="helix" evidence="11">
    <location>
        <begin position="548"/>
        <end position="564"/>
    </location>
</feature>
<feature type="helix" evidence="11">
    <location>
        <begin position="574"/>
        <end position="585"/>
    </location>
</feature>
<sequence length="595" mass="68386">MATELLCLHRPISLTHKLFRNPLPKVIQATPLTLKLRCSVSTENVSFTETETEARRSANYEPNSWDYDFLLSSDTDESIEVYKDKAKKLEAEVRREINNEKAEFLTLLELIDNVQRLGLGYRFESDIRRALDRFVSSGGFDGVTKTSLHATALSFRLLRQHGFEVSQEAFSGFKDQNGNFLENLKEDTKAILSLYEASFLALEGENILDEARVFAISHLKELSEEKIGKELAEQVNHALELPLHRRTQRLEAVWSIEAYRKKEDANQVLLELAILDYNMIQSVYQRDLRETSRWWRRVGLATKLHFAKDRLIESFYWAVGVAFEPQYSDCRNSVAKMFSFVTIIDDIYDVYGTLDELELFTDAVERWDVNAINDLPDYMKLCFLALYNTINEIAYDNLKDKGENILPYLTKAWADLCNAFLQEAKWLYNKSTPTFDDYFGNAWKSSSGPLQLIFAYFAVVQNIKKEEIENLQKYHDIISRPSHIFRLCNDLASASAEIARGETANSVSCYMRTKGISEELATESVMNLIDETCKKMNKEKLGGSLFAKPFVETAINLARQSHCTYHNGDAHTSPDELTRKRVLSVITEPILPFER</sequence>
<name>ISPS_POPCN</name>
<keyword id="KW-0002">3D-structure</keyword>
<keyword id="KW-0150">Chloroplast</keyword>
<keyword id="KW-0456">Lyase</keyword>
<keyword id="KW-0460">Magnesium</keyword>
<keyword id="KW-0479">Metal-binding</keyword>
<keyword id="KW-0934">Plastid</keyword>
<keyword id="KW-0809">Transit peptide</keyword>
<comment type="function">
    <text evidence="4 5">Lyase that catalyzes the formation of isoprene from dimethylallyl diphosphate via a syn-periplanar elimination mechanism in which the diphosphate-leaving group serves as a general base.</text>
</comment>
<comment type="catalytic activity">
    <reaction evidence="4">
        <text>dimethylallyl diphosphate = isoprene + diphosphate</text>
        <dbReference type="Rhea" id="RHEA:13369"/>
        <dbReference type="ChEBI" id="CHEBI:33019"/>
        <dbReference type="ChEBI" id="CHEBI:35194"/>
        <dbReference type="ChEBI" id="CHEBI:57623"/>
        <dbReference type="EC" id="4.2.3.27"/>
    </reaction>
</comment>
<comment type="cofactor">
    <cofactor evidence="1">
        <name>Mg(2+)</name>
        <dbReference type="ChEBI" id="CHEBI:18420"/>
    </cofactor>
    <cofactor evidence="1">
        <name>Mn(2+)</name>
        <dbReference type="ChEBI" id="CHEBI:29035"/>
    </cofactor>
    <text evidence="1">Binds 3 Mg(2+) or Mn(2+) ions per subunit.</text>
</comment>
<comment type="activity regulation">
    <text evidence="5">Competitive inhibition is mediated by geranyl diphosphate (GPP).</text>
</comment>
<comment type="pathway">
    <text evidence="4">Secondary metabolite biosynthesis; terpenoid biosynthesis.</text>
</comment>
<comment type="subunit">
    <text evidence="4">Homodimer.</text>
</comment>
<comment type="subcellular location">
    <subcellularLocation>
        <location evidence="3">Plastid</location>
        <location evidence="3">Chloroplast</location>
    </subcellularLocation>
</comment>
<comment type="domain">
    <text evidence="2">The Asp-Asp-Xaa-Xaa-Asp/Glu (DDXXD/E) motif is important for the catalytic activity, presumably through binding to Mg(2+).</text>
</comment>
<comment type="similarity">
    <text evidence="8">Belongs to the terpene synthase family. Tpsb subfamily.</text>
</comment>
<reference key="1">
    <citation type="journal article" date="2001" name="Planta">
        <title>First isolation of an isoprene synthase gene from poplar and successful expression of the gene in Escherichia coli.</title>
        <authorList>
            <person name="Miller B."/>
            <person name="Oschinski C."/>
            <person name="Zimmer W."/>
        </authorList>
    </citation>
    <scope>NUCLEOTIDE SEQUENCE [MRNA]</scope>
    <scope>FUNCTION</scope>
    <scope>CATALYTIC ACTIVITY</scope>
    <scope>PATHWAY</scope>
</reference>
<reference key="2">
    <citation type="journal article" date="2010" name="J. Mol. Biol.">
        <title>Structure of isoprene synthase illuminates the chemical mechanism of teragram atmospheric carbon emission.</title>
        <authorList>
            <person name="Koeksal M."/>
            <person name="Zimmer I."/>
            <person name="Schnitzler J.-P."/>
            <person name="Christianson D.W."/>
        </authorList>
    </citation>
    <scope>X-RAY CRYSTALLOGRAPHY (2.70 ANGSTROMS) OF 53-595 IN COMPLEX WITH SUBSTRATE ANALOG AND MAGNESIUM</scope>
    <scope>FUNCTION</scope>
    <scope>ACTIVITY REGULATION</scope>
    <scope>HOMODIMERIZATION</scope>
</reference>
<protein>
    <recommendedName>
        <fullName evidence="6">Isoprene synthase, chloroplastic</fullName>
        <shortName evidence="7">PcISPS</shortName>
        <ecNumber evidence="4">4.2.3.27</ecNumber>
    </recommendedName>
</protein>
<dbReference type="EC" id="4.2.3.27" evidence="4"/>
<dbReference type="EMBL" id="AJ294819">
    <property type="protein sequence ID" value="CAC35696.1"/>
    <property type="molecule type" value="mRNA"/>
</dbReference>
<dbReference type="PDB" id="3N0F">
    <property type="method" value="X-ray"/>
    <property type="resolution" value="2.70 A"/>
    <property type="chains" value="A/B=53-595"/>
</dbReference>
<dbReference type="PDB" id="3N0G">
    <property type="method" value="X-ray"/>
    <property type="resolution" value="2.80 A"/>
    <property type="chains" value="A/B=53-595"/>
</dbReference>
<dbReference type="PDBsum" id="3N0F"/>
<dbReference type="PDBsum" id="3N0G"/>
<dbReference type="SMR" id="Q9AR86"/>
<dbReference type="KEGG" id="ag:CAC35696"/>
<dbReference type="BRENDA" id="4.2.3.27">
    <property type="organism ID" value="4978"/>
</dbReference>
<dbReference type="UniPathway" id="UPA00213"/>
<dbReference type="EvolutionaryTrace" id="Q9AR86"/>
<dbReference type="GO" id="GO:0009507">
    <property type="term" value="C:chloroplast"/>
    <property type="evidence" value="ECO:0007669"/>
    <property type="project" value="UniProtKB-SubCell"/>
</dbReference>
<dbReference type="GO" id="GO:0034009">
    <property type="term" value="F:isoprene synthase activity"/>
    <property type="evidence" value="ECO:0007669"/>
    <property type="project" value="UniProtKB-EC"/>
</dbReference>
<dbReference type="GO" id="GO:0000287">
    <property type="term" value="F:magnesium ion binding"/>
    <property type="evidence" value="ECO:0007669"/>
    <property type="project" value="InterPro"/>
</dbReference>
<dbReference type="GO" id="GO:0016102">
    <property type="term" value="P:diterpenoid biosynthetic process"/>
    <property type="evidence" value="ECO:0007669"/>
    <property type="project" value="InterPro"/>
</dbReference>
<dbReference type="GO" id="GO:0120251">
    <property type="term" value="P:hydrocarbon biosynthetic process"/>
    <property type="evidence" value="ECO:0007669"/>
    <property type="project" value="UniProtKB-ARBA"/>
</dbReference>
<dbReference type="CDD" id="cd00684">
    <property type="entry name" value="Terpene_cyclase_plant_C1"/>
    <property type="match status" value="1"/>
</dbReference>
<dbReference type="FunFam" id="1.10.600.10:FF:000007">
    <property type="entry name" value="Isoprene synthase, chloroplastic"/>
    <property type="match status" value="1"/>
</dbReference>
<dbReference type="FunFam" id="1.50.10.130:FF:000001">
    <property type="entry name" value="Isoprene synthase, chloroplastic"/>
    <property type="match status" value="1"/>
</dbReference>
<dbReference type="Gene3D" id="1.10.600.10">
    <property type="entry name" value="Farnesyl Diphosphate Synthase"/>
    <property type="match status" value="1"/>
</dbReference>
<dbReference type="Gene3D" id="1.50.10.130">
    <property type="entry name" value="Terpene synthase, N-terminal domain"/>
    <property type="match status" value="1"/>
</dbReference>
<dbReference type="InterPro" id="IPR008949">
    <property type="entry name" value="Isoprenoid_synthase_dom_sf"/>
</dbReference>
<dbReference type="InterPro" id="IPR034741">
    <property type="entry name" value="Terpene_cyclase-like_1_C"/>
</dbReference>
<dbReference type="InterPro" id="IPR044814">
    <property type="entry name" value="Terpene_cyclase_plant_C1"/>
</dbReference>
<dbReference type="InterPro" id="IPR001906">
    <property type="entry name" value="Terpene_synth_N"/>
</dbReference>
<dbReference type="InterPro" id="IPR036965">
    <property type="entry name" value="Terpene_synth_N_sf"/>
</dbReference>
<dbReference type="InterPro" id="IPR050148">
    <property type="entry name" value="Terpene_synthase-like"/>
</dbReference>
<dbReference type="InterPro" id="IPR005630">
    <property type="entry name" value="Terpene_synthase_metal-bd"/>
</dbReference>
<dbReference type="InterPro" id="IPR008930">
    <property type="entry name" value="Terpenoid_cyclase/PrenylTrfase"/>
</dbReference>
<dbReference type="PANTHER" id="PTHR31225">
    <property type="entry name" value="OS04G0344100 PROTEIN-RELATED"/>
    <property type="match status" value="1"/>
</dbReference>
<dbReference type="PANTHER" id="PTHR31225:SF252">
    <property type="entry name" value="TERPENE SYNTHASE 12-RELATED"/>
    <property type="match status" value="1"/>
</dbReference>
<dbReference type="Pfam" id="PF01397">
    <property type="entry name" value="Terpene_synth"/>
    <property type="match status" value="1"/>
</dbReference>
<dbReference type="Pfam" id="PF03936">
    <property type="entry name" value="Terpene_synth_C"/>
    <property type="match status" value="1"/>
</dbReference>
<dbReference type="SFLD" id="SFLDS00005">
    <property type="entry name" value="Isoprenoid_Synthase_Type_I"/>
    <property type="match status" value="1"/>
</dbReference>
<dbReference type="SFLD" id="SFLDG01019">
    <property type="entry name" value="Terpene_Cyclase_Like_1_C_Termi"/>
    <property type="match status" value="1"/>
</dbReference>
<dbReference type="SFLD" id="SFLDG01014">
    <property type="entry name" value="Terpene_Cyclase_Like_1_N-term"/>
    <property type="match status" value="1"/>
</dbReference>
<dbReference type="SUPFAM" id="SSF48239">
    <property type="entry name" value="Terpenoid cyclases/Protein prenyltransferases"/>
    <property type="match status" value="1"/>
</dbReference>
<dbReference type="SUPFAM" id="SSF48576">
    <property type="entry name" value="Terpenoid synthases"/>
    <property type="match status" value="1"/>
</dbReference>
<organism>
    <name type="scientific">Populus canescens</name>
    <name type="common">Grey poplar</name>
    <name type="synonym">Populus tremula x Populus alba</name>
    <dbReference type="NCBI Taxonomy" id="80863"/>
    <lineage>
        <taxon>Eukaryota</taxon>
        <taxon>Viridiplantae</taxon>
        <taxon>Streptophyta</taxon>
        <taxon>Embryophyta</taxon>
        <taxon>Tracheophyta</taxon>
        <taxon>Spermatophyta</taxon>
        <taxon>Magnoliopsida</taxon>
        <taxon>eudicotyledons</taxon>
        <taxon>Gunneridae</taxon>
        <taxon>Pentapetalae</taxon>
        <taxon>rosids</taxon>
        <taxon>fabids</taxon>
        <taxon>Malpighiales</taxon>
        <taxon>Salicaceae</taxon>
        <taxon>Saliceae</taxon>
        <taxon>Populus</taxon>
    </lineage>
</organism>
<proteinExistence type="evidence at protein level"/>
<evidence type="ECO:0000250" key="1">
    <source>
        <dbReference type="UniProtKB" id="A0A1C9J6A7"/>
    </source>
</evidence>
<evidence type="ECO:0000250" key="2">
    <source>
        <dbReference type="UniProtKB" id="Q40577"/>
    </source>
</evidence>
<evidence type="ECO:0000255" key="3"/>
<evidence type="ECO:0000269" key="4">
    <source>
    </source>
</evidence>
<evidence type="ECO:0000269" key="5">
    <source>
    </source>
</evidence>
<evidence type="ECO:0000303" key="6">
    <source>
    </source>
</evidence>
<evidence type="ECO:0000303" key="7">
    <source>
    </source>
</evidence>
<evidence type="ECO:0000305" key="8"/>
<evidence type="ECO:0000305" key="9">
    <source>
    </source>
</evidence>
<evidence type="ECO:0007744" key="10">
    <source>
        <dbReference type="PDB" id="3N0G"/>
    </source>
</evidence>
<evidence type="ECO:0007829" key="11">
    <source>
        <dbReference type="PDB" id="3N0F"/>
    </source>
</evidence>
<evidence type="ECO:0007829" key="12">
    <source>
        <dbReference type="PDB" id="3N0G"/>
    </source>
</evidence>
<gene>
    <name evidence="6" type="primary">ISPS</name>
</gene>